<organism>
    <name type="scientific">Haemophilus influenzae (strain 86-028NP)</name>
    <dbReference type="NCBI Taxonomy" id="281310"/>
    <lineage>
        <taxon>Bacteria</taxon>
        <taxon>Pseudomonadati</taxon>
        <taxon>Pseudomonadota</taxon>
        <taxon>Gammaproteobacteria</taxon>
        <taxon>Pasteurellales</taxon>
        <taxon>Pasteurellaceae</taxon>
        <taxon>Haemophilus</taxon>
    </lineage>
</organism>
<evidence type="ECO:0000255" key="1">
    <source>
        <dbReference type="HAMAP-Rule" id="MF_00163"/>
    </source>
</evidence>
<evidence type="ECO:0007829" key="2">
    <source>
        <dbReference type="PDB" id="4WXK"/>
    </source>
</evidence>
<evidence type="ECO:0007829" key="3">
    <source>
        <dbReference type="PDB" id="4WXL"/>
    </source>
</evidence>
<proteinExistence type="evidence at protein level"/>
<protein>
    <recommendedName>
        <fullName evidence="1">Peptide deformylase</fullName>
        <shortName evidence="1">PDF</shortName>
        <ecNumber evidence="1">3.5.1.88</ecNumber>
    </recommendedName>
    <alternativeName>
        <fullName evidence="1">Polypeptide deformylase</fullName>
    </alternativeName>
</protein>
<keyword id="KW-0002">3D-structure</keyword>
<keyword id="KW-0378">Hydrolase</keyword>
<keyword id="KW-0408">Iron</keyword>
<keyword id="KW-0479">Metal-binding</keyword>
<keyword id="KW-0648">Protein biosynthesis</keyword>
<sequence>MTALNVLIYPDDHLKVVCEPVTEVNDAIRKIVDDMFDTMYQEKGIGLAAPQVDILQRIITIDVEGDKQNQFVLINPEILASEGETGIEEGCLSIPGFRALVPRKEKVTVRALDRDGKEFTLDADGLLAICIQHEIDHLNGILFVDYLSPLKRQRIKEKLIKYKKQIAKS</sequence>
<name>DEF_HAEI8</name>
<comment type="function">
    <text evidence="1">Removes the formyl group from the N-terminal Met of newly synthesized proteins. Requires at least a dipeptide for an efficient rate of reaction. N-terminal L-methionine is a prerequisite for activity but the enzyme has broad specificity at other positions.</text>
</comment>
<comment type="catalytic activity">
    <reaction evidence="1">
        <text>N-terminal N-formyl-L-methionyl-[peptide] + H2O = N-terminal L-methionyl-[peptide] + formate</text>
        <dbReference type="Rhea" id="RHEA:24420"/>
        <dbReference type="Rhea" id="RHEA-COMP:10639"/>
        <dbReference type="Rhea" id="RHEA-COMP:10640"/>
        <dbReference type="ChEBI" id="CHEBI:15377"/>
        <dbReference type="ChEBI" id="CHEBI:15740"/>
        <dbReference type="ChEBI" id="CHEBI:49298"/>
        <dbReference type="ChEBI" id="CHEBI:64731"/>
        <dbReference type="EC" id="3.5.1.88"/>
    </reaction>
</comment>
<comment type="cofactor">
    <cofactor evidence="1">
        <name>Fe(2+)</name>
        <dbReference type="ChEBI" id="CHEBI:29033"/>
    </cofactor>
    <text evidence="1">Binds 1 Fe(2+) ion.</text>
</comment>
<comment type="similarity">
    <text evidence="1">Belongs to the polypeptide deformylase family.</text>
</comment>
<gene>
    <name evidence="1" type="primary">def</name>
    <name type="ordered locus">NTHI0725</name>
</gene>
<dbReference type="EC" id="3.5.1.88" evidence="1"/>
<dbReference type="EMBL" id="CP000057">
    <property type="protein sequence ID" value="AAX87641.1"/>
    <property type="molecule type" value="Genomic_DNA"/>
</dbReference>
<dbReference type="RefSeq" id="WP_005630900.1">
    <property type="nucleotide sequence ID" value="NC_007146.2"/>
</dbReference>
<dbReference type="PDB" id="4WXK">
    <property type="method" value="X-ray"/>
    <property type="resolution" value="2.05 A"/>
    <property type="chains" value="A/B/C/D=1-169"/>
</dbReference>
<dbReference type="PDB" id="4WXL">
    <property type="method" value="X-ray"/>
    <property type="resolution" value="2.33 A"/>
    <property type="chains" value="A/B/C/D=1-169"/>
</dbReference>
<dbReference type="PDBsum" id="4WXK"/>
<dbReference type="PDBsum" id="4WXL"/>
<dbReference type="SMR" id="Q4QMV6"/>
<dbReference type="GeneID" id="93219600"/>
<dbReference type="KEGG" id="hit:NTHI0725"/>
<dbReference type="HOGENOM" id="CLU_061901_2_1_6"/>
<dbReference type="EvolutionaryTrace" id="Q4QMV6"/>
<dbReference type="Proteomes" id="UP000002525">
    <property type="component" value="Chromosome"/>
</dbReference>
<dbReference type="GO" id="GO:0046872">
    <property type="term" value="F:metal ion binding"/>
    <property type="evidence" value="ECO:0007669"/>
    <property type="project" value="UniProtKB-KW"/>
</dbReference>
<dbReference type="GO" id="GO:0042586">
    <property type="term" value="F:peptide deformylase activity"/>
    <property type="evidence" value="ECO:0007669"/>
    <property type="project" value="UniProtKB-UniRule"/>
</dbReference>
<dbReference type="GO" id="GO:0043686">
    <property type="term" value="P:co-translational protein modification"/>
    <property type="evidence" value="ECO:0007669"/>
    <property type="project" value="TreeGrafter"/>
</dbReference>
<dbReference type="GO" id="GO:0006412">
    <property type="term" value="P:translation"/>
    <property type="evidence" value="ECO:0007669"/>
    <property type="project" value="UniProtKB-UniRule"/>
</dbReference>
<dbReference type="CDD" id="cd00487">
    <property type="entry name" value="Pep_deformylase"/>
    <property type="match status" value="1"/>
</dbReference>
<dbReference type="FunFam" id="3.90.45.10:FF:000001">
    <property type="entry name" value="Peptide deformylase"/>
    <property type="match status" value="1"/>
</dbReference>
<dbReference type="Gene3D" id="3.90.45.10">
    <property type="entry name" value="Peptide deformylase"/>
    <property type="match status" value="1"/>
</dbReference>
<dbReference type="HAMAP" id="MF_00163">
    <property type="entry name" value="Pep_deformylase"/>
    <property type="match status" value="1"/>
</dbReference>
<dbReference type="InterPro" id="IPR023635">
    <property type="entry name" value="Peptide_deformylase"/>
</dbReference>
<dbReference type="InterPro" id="IPR036821">
    <property type="entry name" value="Peptide_deformylase_sf"/>
</dbReference>
<dbReference type="NCBIfam" id="TIGR00079">
    <property type="entry name" value="pept_deformyl"/>
    <property type="match status" value="1"/>
</dbReference>
<dbReference type="NCBIfam" id="NF001159">
    <property type="entry name" value="PRK00150.1-3"/>
    <property type="match status" value="1"/>
</dbReference>
<dbReference type="PANTHER" id="PTHR10458">
    <property type="entry name" value="PEPTIDE DEFORMYLASE"/>
    <property type="match status" value="1"/>
</dbReference>
<dbReference type="PANTHER" id="PTHR10458:SF21">
    <property type="entry name" value="PEPTIDE DEFORMYLASE"/>
    <property type="match status" value="1"/>
</dbReference>
<dbReference type="Pfam" id="PF01327">
    <property type="entry name" value="Pep_deformylase"/>
    <property type="match status" value="1"/>
</dbReference>
<dbReference type="PIRSF" id="PIRSF004749">
    <property type="entry name" value="Pep_def"/>
    <property type="match status" value="1"/>
</dbReference>
<dbReference type="PRINTS" id="PR01576">
    <property type="entry name" value="PDEFORMYLASE"/>
</dbReference>
<dbReference type="SUPFAM" id="SSF56420">
    <property type="entry name" value="Peptide deformylase"/>
    <property type="match status" value="1"/>
</dbReference>
<reference key="1">
    <citation type="journal article" date="2005" name="J. Bacteriol.">
        <title>Genomic sequence of an otitis media isolate of nontypeable Haemophilus influenzae: comparative study with H. influenzae serotype d, strain KW20.</title>
        <authorList>
            <person name="Harrison A."/>
            <person name="Dyer D.W."/>
            <person name="Gillaspy A."/>
            <person name="Ray W.C."/>
            <person name="Mungur R."/>
            <person name="Carson M.B."/>
            <person name="Zhong H."/>
            <person name="Gipson J."/>
            <person name="Gipson M."/>
            <person name="Johnson L.S."/>
            <person name="Lewis L."/>
            <person name="Bakaletz L.O."/>
            <person name="Munson R.S. Jr."/>
        </authorList>
    </citation>
    <scope>NUCLEOTIDE SEQUENCE [LARGE SCALE GENOMIC DNA]</scope>
    <source>
        <strain>86-028NP</strain>
    </source>
</reference>
<feature type="chain" id="PRO_0000301035" description="Peptide deformylase">
    <location>
        <begin position="1"/>
        <end position="169"/>
    </location>
</feature>
<feature type="active site" evidence="1">
    <location>
        <position position="134"/>
    </location>
</feature>
<feature type="binding site" evidence="1">
    <location>
        <position position="91"/>
    </location>
    <ligand>
        <name>Fe cation</name>
        <dbReference type="ChEBI" id="CHEBI:24875"/>
    </ligand>
</feature>
<feature type="binding site" evidence="1">
    <location>
        <position position="133"/>
    </location>
    <ligand>
        <name>Fe cation</name>
        <dbReference type="ChEBI" id="CHEBI:24875"/>
    </ligand>
</feature>
<feature type="binding site" evidence="1">
    <location>
        <position position="137"/>
    </location>
    <ligand>
        <name>Fe cation</name>
        <dbReference type="ChEBI" id="CHEBI:24875"/>
    </ligand>
</feature>
<feature type="helix" evidence="2">
    <location>
        <begin position="12"/>
        <end position="14"/>
    </location>
</feature>
<feature type="helix" evidence="2">
    <location>
        <begin position="26"/>
        <end position="41"/>
    </location>
</feature>
<feature type="strand" evidence="2">
    <location>
        <begin position="45"/>
        <end position="48"/>
    </location>
</feature>
<feature type="helix" evidence="2">
    <location>
        <begin position="49"/>
        <end position="52"/>
    </location>
</feature>
<feature type="strand" evidence="2">
    <location>
        <begin position="56"/>
        <end position="61"/>
    </location>
</feature>
<feature type="strand" evidence="2">
    <location>
        <begin position="63"/>
        <end position="69"/>
    </location>
</feature>
<feature type="strand" evidence="2">
    <location>
        <begin position="71"/>
        <end position="82"/>
    </location>
</feature>
<feature type="strand" evidence="3">
    <location>
        <begin position="88"/>
        <end position="91"/>
    </location>
</feature>
<feature type="strand" evidence="3">
    <location>
        <begin position="94"/>
        <end position="100"/>
    </location>
</feature>
<feature type="strand" evidence="2">
    <location>
        <begin position="105"/>
        <end position="112"/>
    </location>
</feature>
<feature type="strand" evidence="2">
    <location>
        <begin position="118"/>
        <end position="123"/>
    </location>
</feature>
<feature type="helix" evidence="2">
    <location>
        <begin position="125"/>
        <end position="138"/>
    </location>
</feature>
<feature type="helix" evidence="2">
    <location>
        <begin position="143"/>
        <end position="146"/>
    </location>
</feature>
<feature type="helix" evidence="2">
    <location>
        <begin position="149"/>
        <end position="165"/>
    </location>
</feature>
<accession>Q4QMV6</accession>